<reference key="1">
    <citation type="journal article" date="2005" name="BMC Biol.">
        <title>The complete chloroplast DNA sequences of the charophycean green algae Staurastrum and Zygnema reveal that the chloroplast genome underwent extensive changes during the evolution of the Zygnematales.</title>
        <authorList>
            <person name="Turmel M."/>
            <person name="Otis C."/>
            <person name="Lemieux C."/>
        </authorList>
    </citation>
    <scope>NUCLEOTIDE SEQUENCE [LARGE SCALE GENOMIC DNA]</scope>
</reference>
<feature type="chain" id="PRO_0000276520" description="Large ribosomal subunit protein bL33c">
    <location>
        <begin position="1"/>
        <end position="65"/>
    </location>
</feature>
<accession>Q32RT8</accession>
<sequence>MGKNKDVRITITLECTNCPQNKLKRYPGISRYTTQKNRRNTPNRLELKKFCPHCSLHTLHKEIKK</sequence>
<name>RK33_STAPU</name>
<proteinExistence type="inferred from homology"/>
<comment type="subcellular location">
    <subcellularLocation>
        <location>Plastid</location>
        <location>Chloroplast</location>
    </subcellularLocation>
</comment>
<comment type="similarity">
    <text evidence="1">Belongs to the bacterial ribosomal protein bL33 family.</text>
</comment>
<evidence type="ECO:0000255" key="1">
    <source>
        <dbReference type="HAMAP-Rule" id="MF_00294"/>
    </source>
</evidence>
<evidence type="ECO:0000305" key="2"/>
<dbReference type="EMBL" id="AY958085">
    <property type="protein sequence ID" value="AAX45744.1"/>
    <property type="molecule type" value="Genomic_DNA"/>
</dbReference>
<dbReference type="RefSeq" id="YP_636438.1">
    <property type="nucleotide sequence ID" value="NC_008116.1"/>
</dbReference>
<dbReference type="GeneID" id="4108606"/>
<dbReference type="GO" id="GO:0009507">
    <property type="term" value="C:chloroplast"/>
    <property type="evidence" value="ECO:0007669"/>
    <property type="project" value="UniProtKB-SubCell"/>
</dbReference>
<dbReference type="GO" id="GO:1990904">
    <property type="term" value="C:ribonucleoprotein complex"/>
    <property type="evidence" value="ECO:0007669"/>
    <property type="project" value="UniProtKB-KW"/>
</dbReference>
<dbReference type="GO" id="GO:0005840">
    <property type="term" value="C:ribosome"/>
    <property type="evidence" value="ECO:0007669"/>
    <property type="project" value="UniProtKB-KW"/>
</dbReference>
<dbReference type="GO" id="GO:0003735">
    <property type="term" value="F:structural constituent of ribosome"/>
    <property type="evidence" value="ECO:0007669"/>
    <property type="project" value="InterPro"/>
</dbReference>
<dbReference type="GO" id="GO:0006412">
    <property type="term" value="P:translation"/>
    <property type="evidence" value="ECO:0007669"/>
    <property type="project" value="UniProtKB-UniRule"/>
</dbReference>
<dbReference type="Gene3D" id="2.20.28.120">
    <property type="entry name" value="Ribosomal protein L33"/>
    <property type="match status" value="1"/>
</dbReference>
<dbReference type="HAMAP" id="MF_00294">
    <property type="entry name" value="Ribosomal_bL33"/>
    <property type="match status" value="1"/>
</dbReference>
<dbReference type="InterPro" id="IPR001705">
    <property type="entry name" value="Ribosomal_bL33"/>
</dbReference>
<dbReference type="InterPro" id="IPR018264">
    <property type="entry name" value="Ribosomal_bL33_CS"/>
</dbReference>
<dbReference type="InterPro" id="IPR038584">
    <property type="entry name" value="Ribosomal_bL33_sf"/>
</dbReference>
<dbReference type="InterPro" id="IPR011332">
    <property type="entry name" value="Ribosomal_zn-bd"/>
</dbReference>
<dbReference type="NCBIfam" id="NF001764">
    <property type="entry name" value="PRK00504.1"/>
    <property type="match status" value="1"/>
</dbReference>
<dbReference type="NCBIfam" id="NF001860">
    <property type="entry name" value="PRK00595.1"/>
    <property type="match status" value="1"/>
</dbReference>
<dbReference type="NCBIfam" id="TIGR01023">
    <property type="entry name" value="rpmG_bact"/>
    <property type="match status" value="1"/>
</dbReference>
<dbReference type="PANTHER" id="PTHR43168">
    <property type="entry name" value="50S RIBOSOMAL PROTEIN L33, CHLOROPLASTIC"/>
    <property type="match status" value="1"/>
</dbReference>
<dbReference type="PANTHER" id="PTHR43168:SF2">
    <property type="entry name" value="LARGE RIBOSOMAL SUBUNIT PROTEIN BL33C"/>
    <property type="match status" value="1"/>
</dbReference>
<dbReference type="Pfam" id="PF00471">
    <property type="entry name" value="Ribosomal_L33"/>
    <property type="match status" value="1"/>
</dbReference>
<dbReference type="SUPFAM" id="SSF57829">
    <property type="entry name" value="Zn-binding ribosomal proteins"/>
    <property type="match status" value="1"/>
</dbReference>
<dbReference type="PROSITE" id="PS00582">
    <property type="entry name" value="RIBOSOMAL_L33"/>
    <property type="match status" value="1"/>
</dbReference>
<geneLocation type="chloroplast"/>
<protein>
    <recommendedName>
        <fullName evidence="1">Large ribosomal subunit protein bL33c</fullName>
    </recommendedName>
    <alternativeName>
        <fullName evidence="2">50S ribosomal protein L33, chloroplastic</fullName>
    </alternativeName>
</protein>
<keyword id="KW-0150">Chloroplast</keyword>
<keyword id="KW-0934">Plastid</keyword>
<keyword id="KW-0687">Ribonucleoprotein</keyword>
<keyword id="KW-0689">Ribosomal protein</keyword>
<organism>
    <name type="scientific">Staurastrum punctulatum</name>
    <name type="common">Green alga</name>
    <name type="synonym">Cosmoastrum punctulatum</name>
    <dbReference type="NCBI Taxonomy" id="102822"/>
    <lineage>
        <taxon>Eukaryota</taxon>
        <taxon>Viridiplantae</taxon>
        <taxon>Streptophyta</taxon>
        <taxon>Zygnematophyceae</taxon>
        <taxon>Zygnematophycidae</taxon>
        <taxon>Desmidiales</taxon>
        <taxon>Desmidiaceae</taxon>
        <taxon>Staurastrum</taxon>
    </lineage>
</organism>
<gene>
    <name evidence="1" type="primary">rpl33</name>
</gene>